<name>NUON_SULDN</name>
<reference key="1">
    <citation type="journal article" date="2008" name="Appl. Environ. Microbiol.">
        <title>Genome of the epsilonproteobacterial chemolithoautotroph Sulfurimonas denitrificans.</title>
        <authorList>
            <person name="Sievert S.M."/>
            <person name="Scott K.M."/>
            <person name="Klotz M.G."/>
            <person name="Chain P.S.G."/>
            <person name="Hauser L.J."/>
            <person name="Hemp J."/>
            <person name="Huegler M."/>
            <person name="Land M."/>
            <person name="Lapidus A."/>
            <person name="Larimer F.W."/>
            <person name="Lucas S."/>
            <person name="Malfatti S.A."/>
            <person name="Meyer F."/>
            <person name="Paulsen I.T."/>
            <person name="Ren Q."/>
            <person name="Simon J."/>
            <person name="Bailey K."/>
            <person name="Diaz E."/>
            <person name="Fitzpatrick K.A."/>
            <person name="Glover B."/>
            <person name="Gwatney N."/>
            <person name="Korajkic A."/>
            <person name="Long A."/>
            <person name="Mobberley J.M."/>
            <person name="Pantry S.N."/>
            <person name="Pazder G."/>
            <person name="Peterson S."/>
            <person name="Quintanilla J.D."/>
            <person name="Sprinkle R."/>
            <person name="Stephens J."/>
            <person name="Thomas P."/>
            <person name="Vaughn R."/>
            <person name="Weber M.J."/>
            <person name="Wooten L.L."/>
        </authorList>
    </citation>
    <scope>NUCLEOTIDE SEQUENCE [LARGE SCALE GENOMIC DNA]</scope>
    <source>
        <strain>ATCC 33889 / DSM 1251</strain>
    </source>
</reference>
<protein>
    <recommendedName>
        <fullName evidence="1">NADH-quinone oxidoreductase subunit N</fullName>
        <ecNumber evidence="1">7.1.1.-</ecNumber>
    </recommendedName>
    <alternativeName>
        <fullName evidence="1">NADH dehydrogenase I subunit N</fullName>
    </alternativeName>
    <alternativeName>
        <fullName evidence="1">NDH-1 subunit N</fullName>
    </alternativeName>
</protein>
<keyword id="KW-0997">Cell inner membrane</keyword>
<keyword id="KW-1003">Cell membrane</keyword>
<keyword id="KW-0472">Membrane</keyword>
<keyword id="KW-0520">NAD</keyword>
<keyword id="KW-0874">Quinone</keyword>
<keyword id="KW-1185">Reference proteome</keyword>
<keyword id="KW-1278">Translocase</keyword>
<keyword id="KW-0812">Transmembrane</keyword>
<keyword id="KW-1133">Transmembrane helix</keyword>
<keyword id="KW-0813">Transport</keyword>
<keyword id="KW-0830">Ubiquinone</keyword>
<evidence type="ECO:0000255" key="1">
    <source>
        <dbReference type="HAMAP-Rule" id="MF_00445"/>
    </source>
</evidence>
<feature type="chain" id="PRO_0000391232" description="NADH-quinone oxidoreductase subunit N">
    <location>
        <begin position="1"/>
        <end position="502"/>
    </location>
</feature>
<feature type="transmembrane region" description="Helical" evidence="1">
    <location>
        <begin position="16"/>
        <end position="36"/>
    </location>
</feature>
<feature type="transmembrane region" description="Helical" evidence="1">
    <location>
        <begin position="47"/>
        <end position="67"/>
    </location>
</feature>
<feature type="transmembrane region" description="Helical" evidence="1">
    <location>
        <begin position="85"/>
        <end position="105"/>
    </location>
</feature>
<feature type="transmembrane region" description="Helical" evidence="1">
    <location>
        <begin position="113"/>
        <end position="133"/>
    </location>
</feature>
<feature type="transmembrane region" description="Helical" evidence="1">
    <location>
        <begin position="138"/>
        <end position="158"/>
    </location>
</feature>
<feature type="transmembrane region" description="Helical" evidence="1">
    <location>
        <begin position="172"/>
        <end position="192"/>
    </location>
</feature>
<feature type="transmembrane region" description="Helical" evidence="1">
    <location>
        <begin position="213"/>
        <end position="233"/>
    </location>
</feature>
<feature type="transmembrane region" description="Helical" evidence="1">
    <location>
        <begin position="248"/>
        <end position="268"/>
    </location>
</feature>
<feature type="transmembrane region" description="Helical" evidence="1">
    <location>
        <begin position="273"/>
        <end position="293"/>
    </location>
</feature>
<feature type="transmembrane region" description="Helical" evidence="1">
    <location>
        <begin position="310"/>
        <end position="330"/>
    </location>
</feature>
<feature type="transmembrane region" description="Helical" evidence="1">
    <location>
        <begin position="337"/>
        <end position="357"/>
    </location>
</feature>
<feature type="transmembrane region" description="Helical" evidence="1">
    <location>
        <begin position="387"/>
        <end position="407"/>
    </location>
</feature>
<feature type="transmembrane region" description="Helical" evidence="1">
    <location>
        <begin position="410"/>
        <end position="430"/>
    </location>
</feature>
<feature type="transmembrane region" description="Helical" evidence="1">
    <location>
        <begin position="470"/>
        <end position="490"/>
    </location>
</feature>
<proteinExistence type="inferred from homology"/>
<sequence>MLSPVNVSIESLNLMTLVPMLIPIIGALFIIVIDLFKSEQDKSLYVMLSLLILGVDFVALVDSAGVFANNGTIMGVFDMMLIDGLAILSQFIIVGASMLFIPLALTHKRFHEFSYPEFFALFLFMIAGFQFMVSTDNLILIFVGLETASLALYTLIAMHNRDKSFEAAVKYFTMGALAAGFFSFGSMVFYALTGSVEINQIATVLTANNYADIGFVLVGVVFLLAAFGFKLSMVPFHTWTPDVYEGSSAALAGYMSIVPKIAAFIVAMRLFEFLIHSGVVWLEVILYMGVVVTMTMANIWALVQSDVKRMLAYSSISHAGFVMAAILIGTTQSNSALFLYWILFSFTNLGSFSMLWISRQKNLPAHQQSDHSYDKFAGMVKTSPVAASIMALFMLSLAGIPPFALFWGKMYLMSSAITGGYTVLALIMALNSAIAGYYYLKLIVYMFMKDPVVENNGHVYSANATLPLKTIIGIAAIGTIFAFVAVNQLIEFVTLFVYNSGY</sequence>
<comment type="function">
    <text evidence="1">NDH-1 shuttles electrons from NADH, via FMN and iron-sulfur (Fe-S) centers, to quinones in the respiratory chain. The immediate electron acceptor for the enzyme in this species is believed to be ubiquinone. Couples the redox reaction to proton translocation (for every two electrons transferred, four hydrogen ions are translocated across the cytoplasmic membrane), and thus conserves the redox energy in a proton gradient.</text>
</comment>
<comment type="catalytic activity">
    <reaction evidence="1">
        <text>a quinone + NADH + 5 H(+)(in) = a quinol + NAD(+) + 4 H(+)(out)</text>
        <dbReference type="Rhea" id="RHEA:57888"/>
        <dbReference type="ChEBI" id="CHEBI:15378"/>
        <dbReference type="ChEBI" id="CHEBI:24646"/>
        <dbReference type="ChEBI" id="CHEBI:57540"/>
        <dbReference type="ChEBI" id="CHEBI:57945"/>
        <dbReference type="ChEBI" id="CHEBI:132124"/>
    </reaction>
</comment>
<comment type="subunit">
    <text evidence="1">NDH-1 is composed of 14 different subunits. Subunits NuoA, H, J, K, L, M, N constitute the membrane sector of the complex.</text>
</comment>
<comment type="subcellular location">
    <subcellularLocation>
        <location evidence="1">Cell inner membrane</location>
        <topology evidence="1">Multi-pass membrane protein</topology>
    </subcellularLocation>
</comment>
<comment type="similarity">
    <text evidence="1">Belongs to the complex I subunit 2 family.</text>
</comment>
<accession>Q30PJ2</accession>
<gene>
    <name evidence="1" type="primary">nuoN</name>
    <name type="ordered locus">Suden_1815</name>
</gene>
<dbReference type="EC" id="7.1.1.-" evidence="1"/>
<dbReference type="EMBL" id="CP000153">
    <property type="protein sequence ID" value="ABB45089.1"/>
    <property type="molecule type" value="Genomic_DNA"/>
</dbReference>
<dbReference type="RefSeq" id="WP_011373429.1">
    <property type="nucleotide sequence ID" value="NC_007575.1"/>
</dbReference>
<dbReference type="SMR" id="Q30PJ2"/>
<dbReference type="STRING" id="326298.Suden_1815"/>
<dbReference type="KEGG" id="tdn:Suden_1815"/>
<dbReference type="eggNOG" id="COG1007">
    <property type="taxonomic scope" value="Bacteria"/>
</dbReference>
<dbReference type="HOGENOM" id="CLU_007100_1_4_7"/>
<dbReference type="OrthoDB" id="9768329at2"/>
<dbReference type="Proteomes" id="UP000002714">
    <property type="component" value="Chromosome"/>
</dbReference>
<dbReference type="GO" id="GO:0005886">
    <property type="term" value="C:plasma membrane"/>
    <property type="evidence" value="ECO:0007669"/>
    <property type="project" value="UniProtKB-SubCell"/>
</dbReference>
<dbReference type="GO" id="GO:0008137">
    <property type="term" value="F:NADH dehydrogenase (ubiquinone) activity"/>
    <property type="evidence" value="ECO:0007669"/>
    <property type="project" value="InterPro"/>
</dbReference>
<dbReference type="GO" id="GO:0050136">
    <property type="term" value="F:NADH:ubiquinone reductase (non-electrogenic) activity"/>
    <property type="evidence" value="ECO:0007669"/>
    <property type="project" value="UniProtKB-UniRule"/>
</dbReference>
<dbReference type="GO" id="GO:0048038">
    <property type="term" value="F:quinone binding"/>
    <property type="evidence" value="ECO:0007669"/>
    <property type="project" value="UniProtKB-KW"/>
</dbReference>
<dbReference type="GO" id="GO:0042773">
    <property type="term" value="P:ATP synthesis coupled electron transport"/>
    <property type="evidence" value="ECO:0007669"/>
    <property type="project" value="InterPro"/>
</dbReference>
<dbReference type="HAMAP" id="MF_00445">
    <property type="entry name" value="NDH1_NuoN_1"/>
    <property type="match status" value="1"/>
</dbReference>
<dbReference type="InterPro" id="IPR010096">
    <property type="entry name" value="NADH-Q_OxRdtase_suN/2"/>
</dbReference>
<dbReference type="InterPro" id="IPR001750">
    <property type="entry name" value="ND/Mrp_TM"/>
</dbReference>
<dbReference type="NCBIfam" id="TIGR01770">
    <property type="entry name" value="NDH_I_N"/>
    <property type="match status" value="1"/>
</dbReference>
<dbReference type="NCBIfam" id="NF004444">
    <property type="entry name" value="PRK05777.2-2"/>
    <property type="match status" value="1"/>
</dbReference>
<dbReference type="PANTHER" id="PTHR22773">
    <property type="entry name" value="NADH DEHYDROGENASE"/>
    <property type="match status" value="1"/>
</dbReference>
<dbReference type="Pfam" id="PF00361">
    <property type="entry name" value="Proton_antipo_M"/>
    <property type="match status" value="1"/>
</dbReference>
<organism>
    <name type="scientific">Sulfurimonas denitrificans (strain ATCC 33889 / DSM 1251)</name>
    <name type="common">Thiomicrospira denitrificans (strain ATCC 33889 / DSM 1251)</name>
    <dbReference type="NCBI Taxonomy" id="326298"/>
    <lineage>
        <taxon>Bacteria</taxon>
        <taxon>Pseudomonadati</taxon>
        <taxon>Campylobacterota</taxon>
        <taxon>Epsilonproteobacteria</taxon>
        <taxon>Campylobacterales</taxon>
        <taxon>Sulfurimonadaceae</taxon>
        <taxon>Sulfurimonas</taxon>
    </lineage>
</organism>